<sequence length="556" mass="62018">MEPTVAPGEVLMSQAIQPAHADSRGELSAGQLLKWMDTTACLAAEKHAGISCVTASMDDILFEDTARIGQIVTIRAKVTRAFSTSMEISIKVRVQDKFTGIQKLLCVAFSTFVVKPLGKEKVHLKPVLLQTEQEQVEHRLASERRKVRLQHENTFSNIMKESNWLRDPVCNEEEGTATTMATSVQSIELVLPPHANHHGNTFGGQIMAWMETVATISASRLCHGHPFLKSVDMFKFRGPSTVGDRLVFNAIVNNTFQNSVEVGVRVEAFDCREWAEGQGRHINSAFLIYNAVDDQEELITFPRIQPISKDDFRRYQGAIARRRIRLGRKYVISHKKEVPLGTQWDISKKGSISNTNVEALKNLASKSGWEITTTLEKIKIYTLEEQDAISVKVEKQVGSPARVAYHLLSDFTKRPLWDPHYISCEVIDQVSEDDQIYYITCSVVNGDKPKDFVVLVSQRKPLKDDNTYIVALMSVVLPSVPPSPQYIRSQVICAGFLIQPVDSSSCTVAYLNQMSDSILPYFAGNIGGWSKSIEEAAASCIKFIENATHDGLKSVL</sequence>
<gene>
    <name type="primary">Acot12</name>
    <name type="synonym">Cach</name>
    <name type="synonym">Cach1</name>
</gene>
<name>ACO12_RAT</name>
<proteinExistence type="evidence at protein level"/>
<comment type="function">
    <text evidence="5">Catalyzes the hydrolysis of acyl-CoAs into free fatty acids and coenzyme A (CoASH), regulating their respective intracellular levels. Preferentially hydrolyzes acetyl-CoA.</text>
</comment>
<comment type="catalytic activity">
    <reaction evidence="5">
        <text>acetyl-CoA + H2O = acetate + CoA + H(+)</text>
        <dbReference type="Rhea" id="RHEA:20289"/>
        <dbReference type="ChEBI" id="CHEBI:15377"/>
        <dbReference type="ChEBI" id="CHEBI:15378"/>
        <dbReference type="ChEBI" id="CHEBI:30089"/>
        <dbReference type="ChEBI" id="CHEBI:57287"/>
        <dbReference type="ChEBI" id="CHEBI:57288"/>
        <dbReference type="EC" id="3.1.2.1"/>
    </reaction>
    <physiologicalReaction direction="left-to-right" evidence="8">
        <dbReference type="Rhea" id="RHEA:20290"/>
    </physiologicalReaction>
</comment>
<comment type="catalytic activity">
    <reaction evidence="5">
        <text>butanoyl-CoA + H2O = butanoate + CoA + H(+)</text>
        <dbReference type="Rhea" id="RHEA:40111"/>
        <dbReference type="ChEBI" id="CHEBI:15377"/>
        <dbReference type="ChEBI" id="CHEBI:15378"/>
        <dbReference type="ChEBI" id="CHEBI:17968"/>
        <dbReference type="ChEBI" id="CHEBI:57287"/>
        <dbReference type="ChEBI" id="CHEBI:57371"/>
    </reaction>
    <physiologicalReaction direction="left-to-right" evidence="8">
        <dbReference type="Rhea" id="RHEA:40112"/>
    </physiologicalReaction>
</comment>
<comment type="catalytic activity">
    <reaction evidence="5">
        <text>hexanoyl-CoA + H2O = hexanoate + CoA + H(+)</text>
        <dbReference type="Rhea" id="RHEA:40115"/>
        <dbReference type="ChEBI" id="CHEBI:15377"/>
        <dbReference type="ChEBI" id="CHEBI:15378"/>
        <dbReference type="ChEBI" id="CHEBI:17120"/>
        <dbReference type="ChEBI" id="CHEBI:57287"/>
        <dbReference type="ChEBI" id="CHEBI:62620"/>
    </reaction>
    <physiologicalReaction direction="left-to-right" evidence="8">
        <dbReference type="Rhea" id="RHEA:40116"/>
    </physiologicalReaction>
</comment>
<comment type="activity regulation">
    <text evidence="5 6">Allosterically regulated by ATP (activator) and ADP (inhibitor) (PubMed:11322891). Cold labile, it dissociates into inactive monomers at low temperature (PubMed:6136404).</text>
</comment>
<comment type="biophysicochemical properties">
    <kinetics>
        <KM evidence="5">153 uM for acetyl-CoA</KM>
    </kinetics>
</comment>
<comment type="pathway">
    <text evidence="8">Lipid metabolism; fatty acid metabolism.</text>
</comment>
<comment type="subunit">
    <text evidence="6">Homodimer or homotetramer.</text>
</comment>
<comment type="subcellular location">
    <subcellularLocation>
        <location evidence="5">Cytoplasm</location>
        <location evidence="5">Cytosol</location>
    </subcellularLocation>
</comment>
<comment type="induction">
    <text>By 2-(p-chlorophenoxy)isobutyric acid (CPIB).</text>
</comment>
<keyword id="KW-0021">Allosteric enzyme</keyword>
<keyword id="KW-0963">Cytoplasm</keyword>
<keyword id="KW-0903">Direct protein sequencing</keyword>
<keyword id="KW-0276">Fatty acid metabolism</keyword>
<keyword id="KW-0378">Hydrolase</keyword>
<keyword id="KW-0443">Lipid metabolism</keyword>
<keyword id="KW-1185">Reference proteome</keyword>
<keyword id="KW-0677">Repeat</keyword>
<keyword id="KW-0719">Serine esterase</keyword>
<organism>
    <name type="scientific">Rattus norvegicus</name>
    <name type="common">Rat</name>
    <dbReference type="NCBI Taxonomy" id="10116"/>
    <lineage>
        <taxon>Eukaryota</taxon>
        <taxon>Metazoa</taxon>
        <taxon>Chordata</taxon>
        <taxon>Craniata</taxon>
        <taxon>Vertebrata</taxon>
        <taxon>Euteleostomi</taxon>
        <taxon>Mammalia</taxon>
        <taxon>Eutheria</taxon>
        <taxon>Euarchontoglires</taxon>
        <taxon>Glires</taxon>
        <taxon>Rodentia</taxon>
        <taxon>Myomorpha</taxon>
        <taxon>Muroidea</taxon>
        <taxon>Muridae</taxon>
        <taxon>Murinae</taxon>
        <taxon>Rattus</taxon>
    </lineage>
</organism>
<feature type="chain" id="PRO_0000053811" description="Acetyl-coenzyme A thioesterase">
    <location>
        <begin position="1"/>
        <end position="556"/>
    </location>
</feature>
<feature type="domain" description="HotDog ACOT-type 1" evidence="4">
    <location>
        <begin position="6"/>
        <end position="118"/>
    </location>
</feature>
<feature type="domain" description="HotDog ACOT-type 2" evidence="4">
    <location>
        <begin position="180"/>
        <end position="295"/>
    </location>
</feature>
<feature type="domain" description="START" evidence="3">
    <location>
        <begin position="341"/>
        <end position="550"/>
    </location>
</feature>
<feature type="binding site" evidence="1">
    <location>
        <begin position="54"/>
        <end position="56"/>
    </location>
    <ligand>
        <name>CoA</name>
        <dbReference type="ChEBI" id="CHEBI:57287"/>
    </ligand>
</feature>
<feature type="binding site" evidence="1">
    <location>
        <begin position="83"/>
        <end position="85"/>
    </location>
    <ligand>
        <name>CoA</name>
        <dbReference type="ChEBI" id="CHEBI:57287"/>
    </ligand>
</feature>
<feature type="binding site" evidence="1">
    <location>
        <position position="145"/>
    </location>
    <ligand>
        <name>CoA</name>
        <dbReference type="ChEBI" id="CHEBI:57287"/>
    </ligand>
</feature>
<feature type="binding site" evidence="1">
    <location>
        <begin position="235"/>
        <end position="237"/>
    </location>
    <ligand>
        <name>CoA</name>
        <dbReference type="ChEBI" id="CHEBI:57287"/>
    </ligand>
</feature>
<feature type="modified residue" description="N6-succinyllysine" evidence="2">
    <location>
        <position position="34"/>
    </location>
</feature>
<feature type="modified residue" description="N6-succinyllysine" evidence="2">
    <location>
        <position position="97"/>
    </location>
</feature>
<feature type="modified residue" description="N6-succinyllysine" evidence="2">
    <location>
        <position position="160"/>
    </location>
</feature>
<feature type="modified residue" description="N6-succinyllysine" evidence="2">
    <location>
        <position position="229"/>
    </location>
</feature>
<reference key="1">
    <citation type="journal article" date="2001" name="Eur. J. Biochem.">
        <title>Molecular cloning and functional expression of rat liver cytosolic acetyl-CoA hydrolase.</title>
        <authorList>
            <person name="Suematsu N."/>
            <person name="Okamoto K."/>
            <person name="Shibata K."/>
            <person name="Nakanishi Y."/>
            <person name="Isohashi F."/>
        </authorList>
    </citation>
    <scope>NUCLEOTIDE SEQUENCE [MRNA]</scope>
    <scope>PROTEIN SEQUENCE OF 161-174 AND 352-364</scope>
    <scope>FUNCTION</scope>
    <scope>CATALYTIC ACTIVITY</scope>
    <scope>ACTIVITY REGULATION</scope>
    <scope>BIOPHYSICOCHEMICAL PROPERTIES</scope>
    <scope>PATHWAY</scope>
    <source>
        <strain>Donryu</strain>
        <tissue>Liver</tissue>
    </source>
</reference>
<reference key="2">
    <citation type="journal article" date="1983" name="Eur. J. Biochem.">
        <title>Factors affecting the cold inactivation of an acetyl-coenzyme-A hydrolase purified from the supernatant fraction of rat liver.</title>
        <authorList>
            <person name="Isohashi F."/>
            <person name="Nakanishi Y."/>
            <person name="Sakamoto Y."/>
        </authorList>
    </citation>
    <scope>SUBUNIT</scope>
    <scope>ACTIVITY REGULATION</scope>
</reference>
<accession>Q99NB7</accession>
<evidence type="ECO:0000250" key="1"/>
<evidence type="ECO:0000250" key="2">
    <source>
        <dbReference type="UniProtKB" id="Q9DBK0"/>
    </source>
</evidence>
<evidence type="ECO:0000255" key="3">
    <source>
        <dbReference type="PROSITE-ProRule" id="PRU00197"/>
    </source>
</evidence>
<evidence type="ECO:0000255" key="4">
    <source>
        <dbReference type="PROSITE-ProRule" id="PRU01106"/>
    </source>
</evidence>
<evidence type="ECO:0000269" key="5">
    <source>
    </source>
</evidence>
<evidence type="ECO:0000269" key="6">
    <source>
    </source>
</evidence>
<evidence type="ECO:0000305" key="7"/>
<evidence type="ECO:0000305" key="8">
    <source>
    </source>
</evidence>
<protein>
    <recommendedName>
        <fullName evidence="7">Acetyl-coenzyme A thioesterase</fullName>
        <ecNumber evidence="5">3.1.2.1</ecNumber>
    </recommendedName>
    <alternativeName>
        <fullName>Acyl-CoA thioester hydrolase 12</fullName>
    </alternativeName>
    <alternativeName>
        <fullName>Acyl-coenzyme A thioesterase 12</fullName>
        <shortName>Acyl-CoA thioesterase 12</shortName>
    </alternativeName>
    <alternativeName>
        <fullName>Cytoplasmic acetyl-CoA hydrolase 1</fullName>
        <shortName>CACH-1</shortName>
        <shortName>rACH</shortName>
        <shortName>rCACH-1</shortName>
    </alternativeName>
</protein>
<dbReference type="EC" id="3.1.2.1" evidence="5"/>
<dbReference type="EMBL" id="AB040609">
    <property type="protein sequence ID" value="BAB39852.1"/>
    <property type="molecule type" value="mRNA"/>
</dbReference>
<dbReference type="RefSeq" id="NP_570103.1">
    <property type="nucleotide sequence ID" value="NM_130747.1"/>
</dbReference>
<dbReference type="SMR" id="Q99NB7"/>
<dbReference type="FunCoup" id="Q99NB7">
    <property type="interactions" value="63"/>
</dbReference>
<dbReference type="STRING" id="10116.ENSRNOP00000075534"/>
<dbReference type="PhosphoSitePlus" id="Q99NB7"/>
<dbReference type="PaxDb" id="10116-ENSRNOP00000021675"/>
<dbReference type="GeneID" id="170570"/>
<dbReference type="KEGG" id="rno:170570"/>
<dbReference type="UCSC" id="RGD:619752">
    <property type="organism name" value="rat"/>
</dbReference>
<dbReference type="AGR" id="RGD:619752"/>
<dbReference type="CTD" id="134526"/>
<dbReference type="RGD" id="619752">
    <property type="gene designation" value="Acot12"/>
</dbReference>
<dbReference type="eggNOG" id="KOG2763">
    <property type="taxonomic scope" value="Eukaryota"/>
</dbReference>
<dbReference type="InParanoid" id="Q99NB7"/>
<dbReference type="OrthoDB" id="28626at9989"/>
<dbReference type="PhylomeDB" id="Q99NB7"/>
<dbReference type="BRENDA" id="3.1.2.1">
    <property type="organism ID" value="5301"/>
</dbReference>
<dbReference type="Reactome" id="R-RNO-77289">
    <property type="pathway name" value="Mitochondrial Fatty Acid Beta-Oxidation"/>
</dbReference>
<dbReference type="SABIO-RK" id="Q99NB7"/>
<dbReference type="UniPathway" id="UPA00199"/>
<dbReference type="PRO" id="PR:Q99NB7"/>
<dbReference type="Proteomes" id="UP000002494">
    <property type="component" value="Unplaced"/>
</dbReference>
<dbReference type="GO" id="GO:0005737">
    <property type="term" value="C:cytoplasm"/>
    <property type="evidence" value="ECO:0000318"/>
    <property type="project" value="GO_Central"/>
</dbReference>
<dbReference type="GO" id="GO:0005829">
    <property type="term" value="C:cytosol"/>
    <property type="evidence" value="ECO:0000314"/>
    <property type="project" value="HGNC-UCL"/>
</dbReference>
<dbReference type="GO" id="GO:0003986">
    <property type="term" value="F:acetyl-CoA hydrolase activity"/>
    <property type="evidence" value="ECO:0000314"/>
    <property type="project" value="HGNC-UCL"/>
</dbReference>
<dbReference type="GO" id="GO:0005524">
    <property type="term" value="F:ATP binding"/>
    <property type="evidence" value="ECO:0000250"/>
    <property type="project" value="BHF-UCL"/>
</dbReference>
<dbReference type="GO" id="GO:0052689">
    <property type="term" value="F:carboxylic ester hydrolase activity"/>
    <property type="evidence" value="ECO:0007669"/>
    <property type="project" value="UniProtKB-KW"/>
</dbReference>
<dbReference type="GO" id="GO:0042802">
    <property type="term" value="F:identical protein binding"/>
    <property type="evidence" value="ECO:0000353"/>
    <property type="project" value="RGD"/>
</dbReference>
<dbReference type="GO" id="GO:0008289">
    <property type="term" value="F:lipid binding"/>
    <property type="evidence" value="ECO:0007669"/>
    <property type="project" value="InterPro"/>
</dbReference>
<dbReference type="GO" id="GO:0006084">
    <property type="term" value="P:acetyl-CoA metabolic process"/>
    <property type="evidence" value="ECO:0000266"/>
    <property type="project" value="RGD"/>
</dbReference>
<dbReference type="GO" id="GO:0006637">
    <property type="term" value="P:acyl-CoA metabolic process"/>
    <property type="evidence" value="ECO:0000314"/>
    <property type="project" value="HGNC-UCL"/>
</dbReference>
<dbReference type="GO" id="GO:0006631">
    <property type="term" value="P:fatty acid metabolic process"/>
    <property type="evidence" value="ECO:0007669"/>
    <property type="project" value="UniProtKB-UniPathway"/>
</dbReference>
<dbReference type="CDD" id="cd03442">
    <property type="entry name" value="BFIT_BACH"/>
    <property type="match status" value="2"/>
</dbReference>
<dbReference type="FunFam" id="3.10.129.10:FF:000029">
    <property type="entry name" value="Acyl-CoA thioesterase 12"/>
    <property type="match status" value="1"/>
</dbReference>
<dbReference type="FunFam" id="3.30.530.20:FF:000023">
    <property type="entry name" value="Acyl-CoA thioesterase 12"/>
    <property type="match status" value="1"/>
</dbReference>
<dbReference type="FunFam" id="3.10.129.10:FF:000011">
    <property type="entry name" value="Acyl-coenzyme A thioesterase 11"/>
    <property type="match status" value="1"/>
</dbReference>
<dbReference type="Gene3D" id="3.30.530.20">
    <property type="match status" value="1"/>
</dbReference>
<dbReference type="Gene3D" id="3.10.129.10">
    <property type="entry name" value="Hotdog Thioesterase"/>
    <property type="match status" value="2"/>
</dbReference>
<dbReference type="InterPro" id="IPR040170">
    <property type="entry name" value="Cytosol_ACT"/>
</dbReference>
<dbReference type="InterPro" id="IPR033120">
    <property type="entry name" value="HOTDOG_ACOT"/>
</dbReference>
<dbReference type="InterPro" id="IPR029069">
    <property type="entry name" value="HotDog_dom_sf"/>
</dbReference>
<dbReference type="InterPro" id="IPR023393">
    <property type="entry name" value="START-like_dom_sf"/>
</dbReference>
<dbReference type="InterPro" id="IPR002913">
    <property type="entry name" value="START_lipid-bd_dom"/>
</dbReference>
<dbReference type="InterPro" id="IPR006683">
    <property type="entry name" value="Thioestr_dom"/>
</dbReference>
<dbReference type="PANTHER" id="PTHR11049:SF3">
    <property type="entry name" value="ACETYL-COENZYME A THIOESTERASE"/>
    <property type="match status" value="1"/>
</dbReference>
<dbReference type="PANTHER" id="PTHR11049">
    <property type="entry name" value="ACYL COENZYME A THIOESTER HYDROLASE"/>
    <property type="match status" value="1"/>
</dbReference>
<dbReference type="Pfam" id="PF03061">
    <property type="entry name" value="4HBT"/>
    <property type="match status" value="2"/>
</dbReference>
<dbReference type="Pfam" id="PF01852">
    <property type="entry name" value="START"/>
    <property type="match status" value="1"/>
</dbReference>
<dbReference type="SMART" id="SM00234">
    <property type="entry name" value="START"/>
    <property type="match status" value="1"/>
</dbReference>
<dbReference type="SUPFAM" id="SSF55961">
    <property type="entry name" value="Bet v1-like"/>
    <property type="match status" value="1"/>
</dbReference>
<dbReference type="SUPFAM" id="SSF54637">
    <property type="entry name" value="Thioesterase/thiol ester dehydrase-isomerase"/>
    <property type="match status" value="2"/>
</dbReference>
<dbReference type="PROSITE" id="PS51770">
    <property type="entry name" value="HOTDOG_ACOT"/>
    <property type="match status" value="2"/>
</dbReference>
<dbReference type="PROSITE" id="PS50848">
    <property type="entry name" value="START"/>
    <property type="match status" value="1"/>
</dbReference>